<sequence>MRHPVVMGNWKLNGSKEMVVELLNGLNAELEGVTGVDVAVAPPALFVDLAERTLTEAGSAIILGAQNTDLNNSGAFTGDMSPAMLKEFGATHIIIGHSERREYHNESDEFVAKKFAFLKENGLTPVLCIGESEAQNEAGETVAVCARQIDAVINTQGVDALNGAIIAYEPIWAIGTGKAATAEDAQRIHAQIRAHIAEKSEEVAKNVVIQYGGSVKPENAAAYFAQPDIDGALVGGAALDAKSFAAIAKAAAEAKA</sequence>
<gene>
    <name evidence="1" type="primary">tpiA</name>
    <name type="ordered locus">VF_0206</name>
</gene>
<evidence type="ECO:0000255" key="1">
    <source>
        <dbReference type="HAMAP-Rule" id="MF_00147"/>
    </source>
</evidence>
<feature type="chain" id="PRO_0000090313" description="Triosephosphate isomerase">
    <location>
        <begin position="1"/>
        <end position="256"/>
    </location>
</feature>
<feature type="active site" description="Electrophile" evidence="1">
    <location>
        <position position="97"/>
    </location>
</feature>
<feature type="active site" description="Proton acceptor" evidence="1">
    <location>
        <position position="169"/>
    </location>
</feature>
<feature type="binding site" evidence="1">
    <location>
        <begin position="9"/>
        <end position="11"/>
    </location>
    <ligand>
        <name>substrate</name>
    </ligand>
</feature>
<feature type="binding site" evidence="1">
    <location>
        <position position="175"/>
    </location>
    <ligand>
        <name>substrate</name>
    </ligand>
</feature>
<feature type="binding site" evidence="1">
    <location>
        <position position="214"/>
    </location>
    <ligand>
        <name>substrate</name>
    </ligand>
</feature>
<feature type="binding site" evidence="1">
    <location>
        <begin position="235"/>
        <end position="236"/>
    </location>
    <ligand>
        <name>substrate</name>
    </ligand>
</feature>
<dbReference type="EC" id="5.3.1.1" evidence="1"/>
<dbReference type="EMBL" id="CP000020">
    <property type="protein sequence ID" value="AAW84701.1"/>
    <property type="molecule type" value="Genomic_DNA"/>
</dbReference>
<dbReference type="RefSeq" id="WP_011261058.1">
    <property type="nucleotide sequence ID" value="NZ_CAWLES010000001.1"/>
</dbReference>
<dbReference type="RefSeq" id="YP_203589.1">
    <property type="nucleotide sequence ID" value="NC_006840.2"/>
</dbReference>
<dbReference type="SMR" id="Q5E8E5"/>
<dbReference type="STRING" id="312309.VF_0206"/>
<dbReference type="EnsemblBacteria" id="AAW84701">
    <property type="protein sequence ID" value="AAW84701"/>
    <property type="gene ID" value="VF_0206"/>
</dbReference>
<dbReference type="GeneID" id="54162830"/>
<dbReference type="KEGG" id="vfi:VF_0206"/>
<dbReference type="PATRIC" id="fig|312309.11.peg.204"/>
<dbReference type="eggNOG" id="COG0149">
    <property type="taxonomic scope" value="Bacteria"/>
</dbReference>
<dbReference type="HOGENOM" id="CLU_024251_2_3_6"/>
<dbReference type="OrthoDB" id="9809429at2"/>
<dbReference type="UniPathway" id="UPA00109">
    <property type="reaction ID" value="UER00189"/>
</dbReference>
<dbReference type="UniPathway" id="UPA00138"/>
<dbReference type="Proteomes" id="UP000000537">
    <property type="component" value="Chromosome I"/>
</dbReference>
<dbReference type="GO" id="GO:0005829">
    <property type="term" value="C:cytosol"/>
    <property type="evidence" value="ECO:0007669"/>
    <property type="project" value="TreeGrafter"/>
</dbReference>
<dbReference type="GO" id="GO:0004807">
    <property type="term" value="F:triose-phosphate isomerase activity"/>
    <property type="evidence" value="ECO:0007669"/>
    <property type="project" value="UniProtKB-UniRule"/>
</dbReference>
<dbReference type="GO" id="GO:0006094">
    <property type="term" value="P:gluconeogenesis"/>
    <property type="evidence" value="ECO:0007669"/>
    <property type="project" value="UniProtKB-UniRule"/>
</dbReference>
<dbReference type="GO" id="GO:0046166">
    <property type="term" value="P:glyceraldehyde-3-phosphate biosynthetic process"/>
    <property type="evidence" value="ECO:0007669"/>
    <property type="project" value="TreeGrafter"/>
</dbReference>
<dbReference type="GO" id="GO:0019563">
    <property type="term" value="P:glycerol catabolic process"/>
    <property type="evidence" value="ECO:0007669"/>
    <property type="project" value="TreeGrafter"/>
</dbReference>
<dbReference type="GO" id="GO:0006096">
    <property type="term" value="P:glycolytic process"/>
    <property type="evidence" value="ECO:0007669"/>
    <property type="project" value="UniProtKB-UniRule"/>
</dbReference>
<dbReference type="CDD" id="cd00311">
    <property type="entry name" value="TIM"/>
    <property type="match status" value="1"/>
</dbReference>
<dbReference type="FunFam" id="3.20.20.70:FF:000020">
    <property type="entry name" value="Triosephosphate isomerase"/>
    <property type="match status" value="1"/>
</dbReference>
<dbReference type="Gene3D" id="3.20.20.70">
    <property type="entry name" value="Aldolase class I"/>
    <property type="match status" value="1"/>
</dbReference>
<dbReference type="HAMAP" id="MF_00147_B">
    <property type="entry name" value="TIM_B"/>
    <property type="match status" value="1"/>
</dbReference>
<dbReference type="InterPro" id="IPR013785">
    <property type="entry name" value="Aldolase_TIM"/>
</dbReference>
<dbReference type="InterPro" id="IPR035990">
    <property type="entry name" value="TIM_sf"/>
</dbReference>
<dbReference type="InterPro" id="IPR022896">
    <property type="entry name" value="TrioseP_Isoase_bac/euk"/>
</dbReference>
<dbReference type="InterPro" id="IPR000652">
    <property type="entry name" value="Triosephosphate_isomerase"/>
</dbReference>
<dbReference type="InterPro" id="IPR020861">
    <property type="entry name" value="Triosephosphate_isomerase_AS"/>
</dbReference>
<dbReference type="NCBIfam" id="TIGR00419">
    <property type="entry name" value="tim"/>
    <property type="match status" value="1"/>
</dbReference>
<dbReference type="PANTHER" id="PTHR21139">
    <property type="entry name" value="TRIOSEPHOSPHATE ISOMERASE"/>
    <property type="match status" value="1"/>
</dbReference>
<dbReference type="PANTHER" id="PTHR21139:SF42">
    <property type="entry name" value="TRIOSEPHOSPHATE ISOMERASE"/>
    <property type="match status" value="1"/>
</dbReference>
<dbReference type="Pfam" id="PF00121">
    <property type="entry name" value="TIM"/>
    <property type="match status" value="1"/>
</dbReference>
<dbReference type="SUPFAM" id="SSF51351">
    <property type="entry name" value="Triosephosphate isomerase (TIM)"/>
    <property type="match status" value="1"/>
</dbReference>
<dbReference type="PROSITE" id="PS00171">
    <property type="entry name" value="TIM_1"/>
    <property type="match status" value="1"/>
</dbReference>
<dbReference type="PROSITE" id="PS51440">
    <property type="entry name" value="TIM_2"/>
    <property type="match status" value="1"/>
</dbReference>
<comment type="function">
    <text evidence="1">Involved in the gluconeogenesis. Catalyzes stereospecifically the conversion of dihydroxyacetone phosphate (DHAP) to D-glyceraldehyde-3-phosphate (G3P).</text>
</comment>
<comment type="catalytic activity">
    <reaction evidence="1">
        <text>D-glyceraldehyde 3-phosphate = dihydroxyacetone phosphate</text>
        <dbReference type="Rhea" id="RHEA:18585"/>
        <dbReference type="ChEBI" id="CHEBI:57642"/>
        <dbReference type="ChEBI" id="CHEBI:59776"/>
        <dbReference type="EC" id="5.3.1.1"/>
    </reaction>
</comment>
<comment type="pathway">
    <text evidence="1">Carbohydrate biosynthesis; gluconeogenesis.</text>
</comment>
<comment type="pathway">
    <text evidence="1">Carbohydrate degradation; glycolysis; D-glyceraldehyde 3-phosphate from glycerone phosphate: step 1/1.</text>
</comment>
<comment type="subunit">
    <text evidence="1">Homodimer.</text>
</comment>
<comment type="subcellular location">
    <subcellularLocation>
        <location evidence="1">Cytoplasm</location>
    </subcellularLocation>
</comment>
<comment type="similarity">
    <text evidence="1">Belongs to the triosephosphate isomerase family.</text>
</comment>
<protein>
    <recommendedName>
        <fullName evidence="1">Triosephosphate isomerase</fullName>
        <shortName evidence="1">TIM</shortName>
        <shortName evidence="1">TPI</shortName>
        <ecNumber evidence="1">5.3.1.1</ecNumber>
    </recommendedName>
    <alternativeName>
        <fullName evidence="1">Triose-phosphate isomerase</fullName>
    </alternativeName>
</protein>
<keyword id="KW-0963">Cytoplasm</keyword>
<keyword id="KW-0312">Gluconeogenesis</keyword>
<keyword id="KW-0324">Glycolysis</keyword>
<keyword id="KW-0413">Isomerase</keyword>
<keyword id="KW-1185">Reference proteome</keyword>
<name>TPIS_ALIF1</name>
<organism>
    <name type="scientific">Aliivibrio fischeri (strain ATCC 700601 / ES114)</name>
    <name type="common">Vibrio fischeri</name>
    <dbReference type="NCBI Taxonomy" id="312309"/>
    <lineage>
        <taxon>Bacteria</taxon>
        <taxon>Pseudomonadati</taxon>
        <taxon>Pseudomonadota</taxon>
        <taxon>Gammaproteobacteria</taxon>
        <taxon>Vibrionales</taxon>
        <taxon>Vibrionaceae</taxon>
        <taxon>Aliivibrio</taxon>
    </lineage>
</organism>
<accession>Q5E8E5</accession>
<proteinExistence type="inferred from homology"/>
<reference key="1">
    <citation type="journal article" date="2005" name="Proc. Natl. Acad. Sci. U.S.A.">
        <title>Complete genome sequence of Vibrio fischeri: a symbiotic bacterium with pathogenic congeners.</title>
        <authorList>
            <person name="Ruby E.G."/>
            <person name="Urbanowski M."/>
            <person name="Campbell J."/>
            <person name="Dunn A."/>
            <person name="Faini M."/>
            <person name="Gunsalus R."/>
            <person name="Lostroh P."/>
            <person name="Lupp C."/>
            <person name="McCann J."/>
            <person name="Millikan D."/>
            <person name="Schaefer A."/>
            <person name="Stabb E."/>
            <person name="Stevens A."/>
            <person name="Visick K."/>
            <person name="Whistler C."/>
            <person name="Greenberg E.P."/>
        </authorList>
    </citation>
    <scope>NUCLEOTIDE SEQUENCE [LARGE SCALE GENOMIC DNA]</scope>
    <source>
        <strain>ATCC 700601 / ES114</strain>
    </source>
</reference>